<reference key="1">
    <citation type="journal article" date="2009" name="Science">
        <title>The dynamics and time scale of ongoing genomic erosion in symbiotic bacteria.</title>
        <authorList>
            <person name="Moran N.A."/>
            <person name="McLaughlin H.J."/>
            <person name="Sorek R."/>
        </authorList>
    </citation>
    <scope>NUCLEOTIDE SEQUENCE [LARGE SCALE GENOMIC DNA]</scope>
    <source>
        <strain>Tuc7</strain>
    </source>
</reference>
<evidence type="ECO:0000255" key="1">
    <source>
        <dbReference type="HAMAP-Rule" id="MF_00267"/>
    </source>
</evidence>
<dbReference type="EMBL" id="CP001158">
    <property type="protein sequence ID" value="ACL30134.1"/>
    <property type="molecule type" value="Genomic_DNA"/>
</dbReference>
<dbReference type="RefSeq" id="WP_009874282.1">
    <property type="nucleotide sequence ID" value="NC_011834.1"/>
</dbReference>
<dbReference type="SMR" id="B8D7L9"/>
<dbReference type="KEGG" id="bau:BUAPTUC7_321"/>
<dbReference type="HOGENOM" id="CLU_067812_0_1_6"/>
<dbReference type="GO" id="GO:0000902">
    <property type="term" value="P:cell morphogenesis"/>
    <property type="evidence" value="ECO:0007669"/>
    <property type="project" value="InterPro"/>
</dbReference>
<dbReference type="GO" id="GO:0000917">
    <property type="term" value="P:division septum assembly"/>
    <property type="evidence" value="ECO:0007669"/>
    <property type="project" value="UniProtKB-KW"/>
</dbReference>
<dbReference type="GO" id="GO:0051302">
    <property type="term" value="P:regulation of cell division"/>
    <property type="evidence" value="ECO:0007669"/>
    <property type="project" value="InterPro"/>
</dbReference>
<dbReference type="GO" id="GO:1901891">
    <property type="term" value="P:regulation of cell septum assembly"/>
    <property type="evidence" value="ECO:0007669"/>
    <property type="project" value="InterPro"/>
</dbReference>
<dbReference type="Gene3D" id="2.160.20.70">
    <property type="match status" value="1"/>
</dbReference>
<dbReference type="Gene3D" id="3.30.70.260">
    <property type="match status" value="1"/>
</dbReference>
<dbReference type="HAMAP" id="MF_00267">
    <property type="entry name" value="MinC"/>
    <property type="match status" value="1"/>
</dbReference>
<dbReference type="InterPro" id="IPR016098">
    <property type="entry name" value="CAP/MinC_C"/>
</dbReference>
<dbReference type="InterPro" id="IPR013033">
    <property type="entry name" value="MinC"/>
</dbReference>
<dbReference type="InterPro" id="IPR036145">
    <property type="entry name" value="MinC_C_sf"/>
</dbReference>
<dbReference type="InterPro" id="IPR007874">
    <property type="entry name" value="MinC_N"/>
</dbReference>
<dbReference type="InterPro" id="IPR005526">
    <property type="entry name" value="Septum_form_inhib_MinC_C"/>
</dbReference>
<dbReference type="NCBIfam" id="TIGR01222">
    <property type="entry name" value="minC"/>
    <property type="match status" value="1"/>
</dbReference>
<dbReference type="PANTHER" id="PTHR34108">
    <property type="entry name" value="SEPTUM SITE-DETERMINING PROTEIN MINC"/>
    <property type="match status" value="1"/>
</dbReference>
<dbReference type="PANTHER" id="PTHR34108:SF1">
    <property type="entry name" value="SEPTUM SITE-DETERMINING PROTEIN MINC"/>
    <property type="match status" value="1"/>
</dbReference>
<dbReference type="Pfam" id="PF03775">
    <property type="entry name" value="MinC_C"/>
    <property type="match status" value="1"/>
</dbReference>
<dbReference type="Pfam" id="PF05209">
    <property type="entry name" value="MinC_N"/>
    <property type="match status" value="1"/>
</dbReference>
<dbReference type="SUPFAM" id="SSF63848">
    <property type="entry name" value="Cell-division inhibitor MinC, C-terminal domain"/>
    <property type="match status" value="1"/>
</dbReference>
<feature type="chain" id="PRO_1000191237" description="Probable septum site-determining protein MinC">
    <location>
        <begin position="1"/>
        <end position="237"/>
    </location>
</feature>
<protein>
    <recommendedName>
        <fullName evidence="1">Probable septum site-determining protein MinC</fullName>
    </recommendedName>
</protein>
<comment type="function">
    <text evidence="1">Cell division inhibitor that blocks the formation of polar Z ring septums. Rapidly oscillates between the poles of the cell to destabilize FtsZ filaments that have formed before they mature into polar Z rings. Prevents FtsZ polymerization.</text>
</comment>
<comment type="subunit">
    <text evidence="1">Interacts with MinD and FtsZ.</text>
</comment>
<comment type="similarity">
    <text evidence="1">Belongs to the MinC family.</text>
</comment>
<sequence>MQKKSIELKSNNFTLLVLYLNNQNIDLINQSLYKKIQECPKFFKNAPIIVNVSKLCNTVDWKKIKKIIISHGFFVVGVSGCQDGILKKNIIDSGLPILSERKNNKSNIITNFFINSYKNKKKETINKVEKTHIIDIPVRSGQKIYAKHADLIVINNVSAGAELVADGNIHVYGIVRGRVLAGANGDTSRKIFCTGLFAELVSISGEYWLSDQIPSEFIGKSAQIYLKNKFLTINSLS</sequence>
<accession>B8D7L9</accession>
<gene>
    <name evidence="1" type="primary">minC</name>
    <name type="ordered locus">BUAPTUC7_321</name>
</gene>
<organism>
    <name type="scientific">Buchnera aphidicola subsp. Acyrthosiphon pisum (strain Tuc7)</name>
    <dbReference type="NCBI Taxonomy" id="561501"/>
    <lineage>
        <taxon>Bacteria</taxon>
        <taxon>Pseudomonadati</taxon>
        <taxon>Pseudomonadota</taxon>
        <taxon>Gammaproteobacteria</taxon>
        <taxon>Enterobacterales</taxon>
        <taxon>Erwiniaceae</taxon>
        <taxon>Buchnera</taxon>
    </lineage>
</organism>
<proteinExistence type="inferred from homology"/>
<name>MINC_BUCAT</name>
<keyword id="KW-0131">Cell cycle</keyword>
<keyword id="KW-0132">Cell division</keyword>
<keyword id="KW-0717">Septation</keyword>